<comment type="function">
    <text evidence="1">Plays a central role in 2-thiolation of mcm(5)S(2)U at tRNA wobble positions of cytosolic tRNA(Lys), tRNA(Glu) and tRNA(Gln). Also essential during biosynthesis of the molybdenum cofactor. Acts by mediating the C-terminal thiocarboxylation of sulfur carriers urm1 and mocs2a. Its N-terminus first activates urm1 and mocs2a as acyl-adenylates (-COAMP), then the persulfide sulfur on the catalytic cysteine is transferred to urm1 and mocs2a to form thiocarboxylation (-COSH) of their C-terminus. The reaction probably involves hydrogen sulfide that is generated from the persulfide intermediate and that acts as a nucleophile towards urm1 and mocs2a. Subsequently, a transient disulfide bond is formed. Does not use thiosulfate as sulfur donor; nfs1 probably acting as a sulfur donor for thiocarboxylation reactions (By similarity).</text>
</comment>
<comment type="catalytic activity">
    <reaction evidence="3">
        <text>[molybdopterin-synthase sulfur-carrier protein]-C-terminal Gly-Gly + ATP + H(+) = [molybdopterin-synthase sulfur-carrier protein]-C-terminal Gly-Gly-AMP + diphosphate</text>
        <dbReference type="Rhea" id="RHEA:43616"/>
        <dbReference type="Rhea" id="RHEA-COMP:12159"/>
        <dbReference type="Rhea" id="RHEA-COMP:12202"/>
        <dbReference type="ChEBI" id="CHEBI:15378"/>
        <dbReference type="ChEBI" id="CHEBI:30616"/>
        <dbReference type="ChEBI" id="CHEBI:33019"/>
        <dbReference type="ChEBI" id="CHEBI:90618"/>
        <dbReference type="ChEBI" id="CHEBI:90778"/>
        <dbReference type="EC" id="2.7.7.80"/>
    </reaction>
</comment>
<comment type="catalytic activity">
    <reaction evidence="3">
        <text>[molybdopterin-synthase sulfur-carrier protein]-C-terminal Gly-Gly-AMP + S-sulfanyl-L-cysteinyl-[cysteine desulfurase] + AH2 = [molybdopterin-synthase sulfur-carrier protein]-C-terminal-Gly-aminoethanethioate + L-cysteinyl-[cysteine desulfurase] + A + AMP + 2 H(+)</text>
        <dbReference type="Rhea" id="RHEA:48612"/>
        <dbReference type="Rhea" id="RHEA-COMP:12157"/>
        <dbReference type="Rhea" id="RHEA-COMP:12158"/>
        <dbReference type="Rhea" id="RHEA-COMP:12159"/>
        <dbReference type="Rhea" id="RHEA-COMP:19907"/>
        <dbReference type="ChEBI" id="CHEBI:13193"/>
        <dbReference type="ChEBI" id="CHEBI:15378"/>
        <dbReference type="ChEBI" id="CHEBI:17499"/>
        <dbReference type="ChEBI" id="CHEBI:29950"/>
        <dbReference type="ChEBI" id="CHEBI:61963"/>
        <dbReference type="ChEBI" id="CHEBI:90618"/>
        <dbReference type="ChEBI" id="CHEBI:232372"/>
        <dbReference type="ChEBI" id="CHEBI:456215"/>
        <dbReference type="EC" id="2.8.1.11"/>
    </reaction>
</comment>
<comment type="cofactor">
    <cofactor evidence="3">
        <name>Zn(2+)</name>
        <dbReference type="ChEBI" id="CHEBI:29105"/>
    </cofactor>
    <text evidence="3">Binds 1 zinc ion per subunit.</text>
</comment>
<comment type="pathway">
    <text evidence="3">tRNA modification; 5-methoxycarbonylmethyl-2-thiouridine-tRNA biosynthesis.</text>
</comment>
<comment type="pathway">
    <text evidence="3">Cofactor biosynthesis; molybdopterin biosynthesis.</text>
</comment>
<comment type="subcellular location">
    <subcellularLocation>
        <location evidence="2">Cytoplasm</location>
        <location evidence="2">Cytosol</location>
    </subcellularLocation>
</comment>
<comment type="similarity">
    <text evidence="3">In the N-terminal section; belongs to the HesA/MoeB/ThiF family. UBA4 subfamily.</text>
</comment>
<sequence>MDETDSQITCADSSVDKLSHLKRNEVKSCPLPELHGADEMLPELNKSCLTNPDILRYSRQLVLPDLGVQGQLKLSKASVLVIGCGGLGCPVAQYLAASGIGRLGLLDYDVVEMSNLHRQVLHGENRLGMSKSVSVAKTLRKLNSAVVYLPYHISLNPENALQIIQQYDIIADCSDNVPTRYLVNDTCVLAGKPLVSASALRWEGQLTVYNYHQGPCYRCLFPKPPPSETVTNCADGGVLGIVPGIIGSLQALEVLKIASGMAPSYSGVLLMFDALEGRFRNIKIRGKKNDCAACSNPSETAILQDYEAFCGSSASDKCRMLRLLSRDERLSVEEYKRLLDDHVPHILMDVRPQPEVDICRLPHSIHIPLKGLEEKNEKWVSFLRTKIAELITAGNRTEKTVITICKLGNDSQIAVKILQDLFGKEDLFIAKDVQGGLMAWAENIDPMFPRY</sequence>
<protein>
    <recommendedName>
        <fullName evidence="3">Adenylyltransferase and sulfurtransferase MOCS3</fullName>
    </recommendedName>
    <alternativeName>
        <fullName evidence="3">Molybdenum cofactor synthesis protein 3</fullName>
    </alternativeName>
    <domain>
        <recommendedName>
            <fullName evidence="3">Molybdopterin-synthase adenylyltransferase</fullName>
            <ecNumber evidence="3">2.7.7.80</ecNumber>
        </recommendedName>
        <alternativeName>
            <fullName evidence="3">Adenylyltransferase MOCS3</fullName>
        </alternativeName>
        <alternativeName>
            <fullName evidence="3">Sulfur carrier protein MOCS2A adenylyltransferase</fullName>
        </alternativeName>
    </domain>
    <domain>
        <recommendedName>
            <fullName evidence="3">Molybdopterin-synthase sulfurtransferase</fullName>
            <ecNumber evidence="3">2.8.1.11</ecNumber>
        </recommendedName>
        <alternativeName>
            <fullName evidence="3">Sulfur carrier protein MOCS2A sulfurtransferase</fullName>
        </alternativeName>
        <alternativeName>
            <fullName evidence="3">Sulfurtransferase MOCS3</fullName>
        </alternativeName>
    </domain>
</protein>
<dbReference type="EC" id="2.7.7.80" evidence="3"/>
<dbReference type="EC" id="2.8.1.11" evidence="3"/>
<dbReference type="EMBL" id="BC092020">
    <property type="protein sequence ID" value="AAH92020.1"/>
    <property type="molecule type" value="mRNA"/>
</dbReference>
<dbReference type="RefSeq" id="NP_001089319.1">
    <property type="nucleotide sequence ID" value="NM_001095850.1"/>
</dbReference>
<dbReference type="SMR" id="Q58E95"/>
<dbReference type="DNASU" id="734369"/>
<dbReference type="GeneID" id="734369"/>
<dbReference type="KEGG" id="xla:734369"/>
<dbReference type="AGR" id="Xenbase:XB-GENE-5804203"/>
<dbReference type="CTD" id="734369"/>
<dbReference type="Xenbase" id="XB-GENE-5804203">
    <property type="gene designation" value="mocs3.L"/>
</dbReference>
<dbReference type="OMA" id="IPDVGMD"/>
<dbReference type="OrthoDB" id="10261062at2759"/>
<dbReference type="UniPathway" id="UPA00344"/>
<dbReference type="UniPathway" id="UPA00988"/>
<dbReference type="Proteomes" id="UP000186698">
    <property type="component" value="Chromosome 5L"/>
</dbReference>
<dbReference type="Bgee" id="734369">
    <property type="expression patterns" value="Expressed in egg cell and 19 other cell types or tissues"/>
</dbReference>
<dbReference type="GO" id="GO:0005737">
    <property type="term" value="C:cytoplasm"/>
    <property type="evidence" value="ECO:0000318"/>
    <property type="project" value="GO_Central"/>
</dbReference>
<dbReference type="GO" id="GO:0005829">
    <property type="term" value="C:cytosol"/>
    <property type="evidence" value="ECO:0000250"/>
    <property type="project" value="UniProtKB"/>
</dbReference>
<dbReference type="GO" id="GO:0005524">
    <property type="term" value="F:ATP binding"/>
    <property type="evidence" value="ECO:0007669"/>
    <property type="project" value="UniProtKB-KW"/>
</dbReference>
<dbReference type="GO" id="GO:0046872">
    <property type="term" value="F:metal ion binding"/>
    <property type="evidence" value="ECO:0007669"/>
    <property type="project" value="UniProtKB-KW"/>
</dbReference>
<dbReference type="GO" id="GO:0061605">
    <property type="term" value="F:molybdopterin-synthase adenylyltransferase activity"/>
    <property type="evidence" value="ECO:0007669"/>
    <property type="project" value="UniProtKB-EC"/>
</dbReference>
<dbReference type="GO" id="GO:0061604">
    <property type="term" value="F:molybdopterin-synthase sulfurtransferase activity"/>
    <property type="evidence" value="ECO:0000250"/>
    <property type="project" value="UniProtKB"/>
</dbReference>
<dbReference type="GO" id="GO:0016779">
    <property type="term" value="F:nucleotidyltransferase activity"/>
    <property type="evidence" value="ECO:0000250"/>
    <property type="project" value="UniProtKB"/>
</dbReference>
<dbReference type="GO" id="GO:0016783">
    <property type="term" value="F:sulfurtransferase activity"/>
    <property type="evidence" value="ECO:0000250"/>
    <property type="project" value="UniProtKB"/>
</dbReference>
<dbReference type="GO" id="GO:0004792">
    <property type="term" value="F:thiosulfate-cyanide sulfurtransferase activity"/>
    <property type="evidence" value="ECO:0000318"/>
    <property type="project" value="GO_Central"/>
</dbReference>
<dbReference type="GO" id="GO:0042292">
    <property type="term" value="F:URM1 activating enzyme activity"/>
    <property type="evidence" value="ECO:0000250"/>
    <property type="project" value="UniProtKB"/>
</dbReference>
<dbReference type="GO" id="GO:0030901">
    <property type="term" value="P:midbrain development"/>
    <property type="evidence" value="ECO:0000314"/>
    <property type="project" value="Xenbase"/>
</dbReference>
<dbReference type="GO" id="GO:0006777">
    <property type="term" value="P:Mo-molybdopterin cofactor biosynthetic process"/>
    <property type="evidence" value="ECO:0000250"/>
    <property type="project" value="UniProtKB"/>
</dbReference>
<dbReference type="GO" id="GO:0061351">
    <property type="term" value="P:neural precursor cell proliferation"/>
    <property type="evidence" value="ECO:0000315"/>
    <property type="project" value="Xenbase"/>
</dbReference>
<dbReference type="GO" id="GO:0032447">
    <property type="term" value="P:protein urmylation"/>
    <property type="evidence" value="ECO:0000318"/>
    <property type="project" value="GO_Central"/>
</dbReference>
<dbReference type="GO" id="GO:0034227">
    <property type="term" value="P:tRNA thio-modification"/>
    <property type="evidence" value="ECO:0000250"/>
    <property type="project" value="UniProtKB"/>
</dbReference>
<dbReference type="GO" id="GO:0002143">
    <property type="term" value="P:tRNA wobble position uridine thiolation"/>
    <property type="evidence" value="ECO:0000318"/>
    <property type="project" value="GO_Central"/>
</dbReference>
<dbReference type="GO" id="GO:0002098">
    <property type="term" value="P:tRNA wobble uridine modification"/>
    <property type="evidence" value="ECO:0000250"/>
    <property type="project" value="UniProtKB"/>
</dbReference>
<dbReference type="CDD" id="cd00757">
    <property type="entry name" value="ThiF_MoeB_HesA_family"/>
    <property type="match status" value="1"/>
</dbReference>
<dbReference type="FunFam" id="3.40.250.10:FF:000014">
    <property type="entry name" value="Adenylyltransferase and sulfurtransferase MOCS3"/>
    <property type="match status" value="1"/>
</dbReference>
<dbReference type="FunFam" id="3.40.50.720:FF:000206">
    <property type="entry name" value="Adenylyltransferase and sulfurtransferase MOCS3"/>
    <property type="match status" value="1"/>
</dbReference>
<dbReference type="Gene3D" id="3.40.50.720">
    <property type="entry name" value="NAD(P)-binding Rossmann-like Domain"/>
    <property type="match status" value="1"/>
</dbReference>
<dbReference type="Gene3D" id="3.40.250.10">
    <property type="entry name" value="Rhodanese-like domain"/>
    <property type="match status" value="1"/>
</dbReference>
<dbReference type="HAMAP" id="MF_03049">
    <property type="entry name" value="MOCS3_Uba4"/>
    <property type="match status" value="1"/>
</dbReference>
<dbReference type="InterPro" id="IPR028885">
    <property type="entry name" value="MOCS3/Uba4"/>
</dbReference>
<dbReference type="InterPro" id="IPR001763">
    <property type="entry name" value="Rhodanese-like_dom"/>
</dbReference>
<dbReference type="InterPro" id="IPR036873">
    <property type="entry name" value="Rhodanese-like_dom_sf"/>
</dbReference>
<dbReference type="InterPro" id="IPR045886">
    <property type="entry name" value="ThiF/MoeB/HesA"/>
</dbReference>
<dbReference type="InterPro" id="IPR000594">
    <property type="entry name" value="ThiF_NAD_FAD-bd"/>
</dbReference>
<dbReference type="InterPro" id="IPR035985">
    <property type="entry name" value="Ubiquitin-activating_enz"/>
</dbReference>
<dbReference type="NCBIfam" id="NF004281">
    <property type="entry name" value="PRK05690.1"/>
    <property type="match status" value="1"/>
</dbReference>
<dbReference type="PANTHER" id="PTHR10953:SF102">
    <property type="entry name" value="ADENYLYLTRANSFERASE AND SULFURTRANSFERASE MOCS3"/>
    <property type="match status" value="1"/>
</dbReference>
<dbReference type="PANTHER" id="PTHR10953">
    <property type="entry name" value="UBIQUITIN-ACTIVATING ENZYME E1"/>
    <property type="match status" value="1"/>
</dbReference>
<dbReference type="Pfam" id="PF00581">
    <property type="entry name" value="Rhodanese"/>
    <property type="match status" value="1"/>
</dbReference>
<dbReference type="Pfam" id="PF00899">
    <property type="entry name" value="ThiF"/>
    <property type="match status" value="1"/>
</dbReference>
<dbReference type="SMART" id="SM00450">
    <property type="entry name" value="RHOD"/>
    <property type="match status" value="1"/>
</dbReference>
<dbReference type="SUPFAM" id="SSF69572">
    <property type="entry name" value="Activating enzymes of the ubiquitin-like proteins"/>
    <property type="match status" value="1"/>
</dbReference>
<dbReference type="PROSITE" id="PS50206">
    <property type="entry name" value="RHODANESE_3"/>
    <property type="match status" value="1"/>
</dbReference>
<keyword id="KW-0067">ATP-binding</keyword>
<keyword id="KW-0963">Cytoplasm</keyword>
<keyword id="KW-1015">Disulfide bond</keyword>
<keyword id="KW-0479">Metal-binding</keyword>
<keyword id="KW-0501">Molybdenum cofactor biosynthesis</keyword>
<keyword id="KW-0511">Multifunctional enzyme</keyword>
<keyword id="KW-0547">Nucleotide-binding</keyword>
<keyword id="KW-0548">Nucleotidyltransferase</keyword>
<keyword id="KW-1185">Reference proteome</keyword>
<keyword id="KW-0808">Transferase</keyword>
<keyword id="KW-0819">tRNA processing</keyword>
<keyword id="KW-0862">Zinc</keyword>
<name>MOCS3_XENLA</name>
<evidence type="ECO:0000250" key="1"/>
<evidence type="ECO:0000250" key="2">
    <source>
        <dbReference type="UniProtKB" id="O95396"/>
    </source>
</evidence>
<evidence type="ECO:0000255" key="3">
    <source>
        <dbReference type="HAMAP-Rule" id="MF_03049"/>
    </source>
</evidence>
<accession>Q58E95</accession>
<reference key="1">
    <citation type="submission" date="2005-03" db="EMBL/GenBank/DDBJ databases">
        <authorList>
            <consortium name="NIH - Xenopus Gene Collection (XGC) project"/>
        </authorList>
    </citation>
    <scope>NUCLEOTIDE SEQUENCE [LARGE SCALE MRNA]</scope>
    <source>
        <tissue>Egg</tissue>
    </source>
</reference>
<feature type="chain" id="PRO_0000369196" description="Adenylyltransferase and sulfurtransferase MOCS3">
    <location>
        <begin position="1"/>
        <end position="451"/>
    </location>
</feature>
<feature type="domain" description="Rhodanese" evidence="3">
    <location>
        <begin position="341"/>
        <end position="449"/>
    </location>
</feature>
<feature type="active site" description="Glycyl thioester intermediate; for adenylyltransferase activity" evidence="3">
    <location>
        <position position="233"/>
    </location>
</feature>
<feature type="active site" description="Cysteine persulfide intermediate; for sulfurtransferase activity" evidence="3">
    <location>
        <position position="405"/>
    </location>
</feature>
<feature type="binding site" evidence="3">
    <location>
        <position position="86"/>
    </location>
    <ligand>
        <name>ATP</name>
        <dbReference type="ChEBI" id="CHEBI:30616"/>
    </ligand>
</feature>
<feature type="binding site" evidence="3">
    <location>
        <position position="107"/>
    </location>
    <ligand>
        <name>ATP</name>
        <dbReference type="ChEBI" id="CHEBI:30616"/>
    </ligand>
</feature>
<feature type="binding site" evidence="3">
    <location>
        <begin position="114"/>
        <end position="118"/>
    </location>
    <ligand>
        <name>ATP</name>
        <dbReference type="ChEBI" id="CHEBI:30616"/>
    </ligand>
</feature>
<feature type="binding site" evidence="3">
    <location>
        <position position="131"/>
    </location>
    <ligand>
        <name>ATP</name>
        <dbReference type="ChEBI" id="CHEBI:30616"/>
    </ligand>
</feature>
<feature type="binding site" evidence="3">
    <location>
        <begin position="175"/>
        <end position="176"/>
    </location>
    <ligand>
        <name>ATP</name>
        <dbReference type="ChEBI" id="CHEBI:30616"/>
    </ligand>
</feature>
<feature type="binding site" evidence="3">
    <location>
        <position position="216"/>
    </location>
    <ligand>
        <name>Zn(2+)</name>
        <dbReference type="ChEBI" id="CHEBI:29105"/>
    </ligand>
</feature>
<feature type="binding site" evidence="3">
    <location>
        <position position="219"/>
    </location>
    <ligand>
        <name>Zn(2+)</name>
        <dbReference type="ChEBI" id="CHEBI:29105"/>
    </ligand>
</feature>
<feature type="binding site" evidence="3">
    <location>
        <position position="291"/>
    </location>
    <ligand>
        <name>Zn(2+)</name>
        <dbReference type="ChEBI" id="CHEBI:29105"/>
    </ligand>
</feature>
<feature type="binding site" evidence="3">
    <location>
        <position position="294"/>
    </location>
    <ligand>
        <name>Zn(2+)</name>
        <dbReference type="ChEBI" id="CHEBI:29105"/>
    </ligand>
</feature>
<feature type="disulfide bond" description="Alternate" evidence="3">
    <location>
        <begin position="310"/>
        <end position="318"/>
    </location>
</feature>
<proteinExistence type="evidence at transcript level"/>
<organism>
    <name type="scientific">Xenopus laevis</name>
    <name type="common">African clawed frog</name>
    <dbReference type="NCBI Taxonomy" id="8355"/>
    <lineage>
        <taxon>Eukaryota</taxon>
        <taxon>Metazoa</taxon>
        <taxon>Chordata</taxon>
        <taxon>Craniata</taxon>
        <taxon>Vertebrata</taxon>
        <taxon>Euteleostomi</taxon>
        <taxon>Amphibia</taxon>
        <taxon>Batrachia</taxon>
        <taxon>Anura</taxon>
        <taxon>Pipoidea</taxon>
        <taxon>Pipidae</taxon>
        <taxon>Xenopodinae</taxon>
        <taxon>Xenopus</taxon>
        <taxon>Xenopus</taxon>
    </lineage>
</organism>
<gene>
    <name type="primary">mocs3</name>
    <name type="synonym">uba4</name>
</gene>